<organismHost>
    <name type="scientific">Escherichia coli</name>
    <dbReference type="NCBI Taxonomy" id="562"/>
</organismHost>
<proteinExistence type="predicted"/>
<accession>P39501</accession>
<reference key="1">
    <citation type="journal article" date="2003" name="Microbiol. Mol. Biol. Rev.">
        <title>Bacteriophage T4 genome.</title>
        <authorList>
            <person name="Miller E.S."/>
            <person name="Kutter E."/>
            <person name="Mosig G."/>
            <person name="Arisaka F."/>
            <person name="Kunisawa T."/>
            <person name="Ruger W."/>
        </authorList>
    </citation>
    <scope>NUCLEOTIDE SEQUENCE [LARGE SCALE GENOMIC DNA]</scope>
</reference>
<feature type="chain" id="PRO_0000165181" description="Uncharacterized 8.7 kDa protein in cd-pseT intergenic region">
    <location>
        <begin position="1"/>
        <end position="75"/>
    </location>
</feature>
<name>Y13H_BPT4</name>
<protein>
    <recommendedName>
        <fullName>Uncharacterized 8.7 kDa protein in cd-pseT intergenic region</fullName>
    </recommendedName>
</protein>
<gene>
    <name type="primary">y13H</name>
    <name type="synonym">cd.5</name>
</gene>
<sequence>MLASRFGRFLMAWHHETWAIVIVNSGLVGTSNGQFCVFTSENRAWEECLKLREKNPDVELVVKKTKLPLPWKTYE</sequence>
<dbReference type="EMBL" id="AF158101">
    <property type="protein sequence ID" value="AAD42551.1"/>
    <property type="molecule type" value="Genomic_DNA"/>
</dbReference>
<dbReference type="RefSeq" id="NP_049833.1">
    <property type="nucleotide sequence ID" value="NC_000866.4"/>
</dbReference>
<dbReference type="SMR" id="P39501"/>
<dbReference type="GeneID" id="1258708"/>
<dbReference type="KEGG" id="vg:1258708"/>
<dbReference type="OrthoDB" id="22515at10239"/>
<dbReference type="Proteomes" id="UP000009087">
    <property type="component" value="Segment"/>
</dbReference>
<keyword id="KW-1185">Reference proteome</keyword>
<organism>
    <name type="scientific">Enterobacteria phage T4</name>
    <name type="common">Bacteriophage T4</name>
    <dbReference type="NCBI Taxonomy" id="10665"/>
    <lineage>
        <taxon>Viruses</taxon>
        <taxon>Duplodnaviria</taxon>
        <taxon>Heunggongvirae</taxon>
        <taxon>Uroviricota</taxon>
        <taxon>Caudoviricetes</taxon>
        <taxon>Straboviridae</taxon>
        <taxon>Tevenvirinae</taxon>
        <taxon>Tequatrovirus</taxon>
    </lineage>
</organism>